<name>HIPK4_RAT</name>
<comment type="function">
    <text evidence="1 6">Protein kinase that phosphorylates TP53, and thus induces TP53 repression of BIRC5 promoter (By similarity). May act as a corepressor of transcription factors (Potential).</text>
</comment>
<comment type="catalytic activity">
    <reaction>
        <text>L-seryl-[protein] + ATP = O-phospho-L-seryl-[protein] + ADP + H(+)</text>
        <dbReference type="Rhea" id="RHEA:17989"/>
        <dbReference type="Rhea" id="RHEA-COMP:9863"/>
        <dbReference type="Rhea" id="RHEA-COMP:11604"/>
        <dbReference type="ChEBI" id="CHEBI:15378"/>
        <dbReference type="ChEBI" id="CHEBI:29999"/>
        <dbReference type="ChEBI" id="CHEBI:30616"/>
        <dbReference type="ChEBI" id="CHEBI:83421"/>
        <dbReference type="ChEBI" id="CHEBI:456216"/>
        <dbReference type="EC" id="2.7.11.1"/>
    </reaction>
</comment>
<comment type="catalytic activity">
    <reaction>
        <text>L-threonyl-[protein] + ATP = O-phospho-L-threonyl-[protein] + ADP + H(+)</text>
        <dbReference type="Rhea" id="RHEA:46608"/>
        <dbReference type="Rhea" id="RHEA-COMP:11060"/>
        <dbReference type="Rhea" id="RHEA-COMP:11605"/>
        <dbReference type="ChEBI" id="CHEBI:15378"/>
        <dbReference type="ChEBI" id="CHEBI:30013"/>
        <dbReference type="ChEBI" id="CHEBI:30616"/>
        <dbReference type="ChEBI" id="CHEBI:61977"/>
        <dbReference type="ChEBI" id="CHEBI:456216"/>
        <dbReference type="EC" id="2.7.11.1"/>
    </reaction>
</comment>
<comment type="subcellular location">
    <subcellularLocation>
        <location evidence="1">Cytoplasm</location>
    </subcellularLocation>
</comment>
<comment type="PTM">
    <text evidence="1">Autophosphorylated.</text>
</comment>
<comment type="similarity">
    <text evidence="6">Belongs to the protein kinase superfamily. CMGC Ser/Thr protein kinase family. HIPK subfamily.</text>
</comment>
<protein>
    <recommendedName>
        <fullName>Homeodomain-interacting protein kinase 4</fullName>
        <ecNumber>2.7.11.1</ecNumber>
    </recommendedName>
</protein>
<sequence length="616" mass="69298">MATIQSETDCYDIIEVLGKGTFGEVAKGWRRSTGEMVAIKILKNDAYRSRIIKNELKLLRCVRGLDPDEAHVIRFLEFFHDALKFYLVFELLEQNLFEFQKENNFAPLPARHIRTVTLQVLRALARLKELAIIHADLKPENIMLVDQTRCPFRVKVIDFGSASIFSEVRYVKEPYIQSRFYRAPEILLGLPFCEKVDVWSLGCVMAELHLGWPLYPGNNEYDQVRYICETQGLPKPHLLHAARKAHHFFKRNPHPDATNPWQLKSSADYLAETKVRPLERRKYMLKSLDQIETVNGGGAVNRLSFPDREALAEHADLKSMVELIKRMLTWESHERISPSAALRHPFVSMQQLRSAHEATRYYQLSLRGCRLSLQVDGKPPPPVIANAEDGPPYYRLAEEEETAGLGGVTGSGSFFREDKAPGMQRAIDQLDDLSLQEARRGLWSDTRADMVSDMLAPLKVATTSHRVPDSGPEPILAFYGSRLTGRHKARKAPAGSKSDSNFSNLIRLSQASPEDAGSCRGSGWEEGEGHTTSTEPSAIPQREGDGPSIKDRPMDAERSGPELFDPSGCPGEWLNEPEWTLEGIRGSRAQGLPARHPHPHGPPRTTSFLQHVGGHH</sequence>
<evidence type="ECO:0000250" key="1"/>
<evidence type="ECO:0000250" key="2">
    <source>
        <dbReference type="UniProtKB" id="Q3V016"/>
    </source>
</evidence>
<evidence type="ECO:0000255" key="3">
    <source>
        <dbReference type="PROSITE-ProRule" id="PRU00159"/>
    </source>
</evidence>
<evidence type="ECO:0000255" key="4">
    <source>
        <dbReference type="PROSITE-ProRule" id="PRU10027"/>
    </source>
</evidence>
<evidence type="ECO:0000256" key="5">
    <source>
        <dbReference type="SAM" id="MobiDB-lite"/>
    </source>
</evidence>
<evidence type="ECO:0000305" key="6"/>
<accession>Q4V793</accession>
<feature type="chain" id="PRO_0000232403" description="Homeodomain-interacting protein kinase 4">
    <location>
        <begin position="1"/>
        <end position="616"/>
    </location>
</feature>
<feature type="domain" description="Protein kinase" evidence="3">
    <location>
        <begin position="11"/>
        <end position="347"/>
    </location>
</feature>
<feature type="region of interest" description="Disordered" evidence="5">
    <location>
        <begin position="487"/>
        <end position="616"/>
    </location>
</feature>
<feature type="compositionally biased region" description="Polar residues" evidence="5">
    <location>
        <begin position="497"/>
        <end position="512"/>
    </location>
</feature>
<feature type="compositionally biased region" description="Basic and acidic residues" evidence="5">
    <location>
        <begin position="542"/>
        <end position="560"/>
    </location>
</feature>
<feature type="active site" description="Proton acceptor" evidence="3 4">
    <location>
        <position position="136"/>
    </location>
</feature>
<feature type="binding site" evidence="3">
    <location>
        <begin position="17"/>
        <end position="25"/>
    </location>
    <ligand>
        <name>ATP</name>
        <dbReference type="ChEBI" id="CHEBI:30616"/>
    </ligand>
</feature>
<feature type="binding site" evidence="3">
    <location>
        <position position="40"/>
    </location>
    <ligand>
        <name>ATP</name>
        <dbReference type="ChEBI" id="CHEBI:30616"/>
    </ligand>
</feature>
<feature type="modified residue" description="Phosphoserine" evidence="2">
    <location>
        <position position="512"/>
    </location>
</feature>
<keyword id="KW-0067">ATP-binding</keyword>
<keyword id="KW-0963">Cytoplasm</keyword>
<keyword id="KW-0418">Kinase</keyword>
<keyword id="KW-0547">Nucleotide-binding</keyword>
<keyword id="KW-0597">Phosphoprotein</keyword>
<keyword id="KW-1185">Reference proteome</keyword>
<keyword id="KW-0723">Serine/threonine-protein kinase</keyword>
<keyword id="KW-0808">Transferase</keyword>
<proteinExistence type="evidence at transcript level"/>
<dbReference type="EC" id="2.7.11.1"/>
<dbReference type="EMBL" id="BC098070">
    <property type="protein sequence ID" value="AAH98070.1"/>
    <property type="molecule type" value="mRNA"/>
</dbReference>
<dbReference type="RefSeq" id="NP_001019947.1">
    <property type="nucleotide sequence ID" value="NM_001024776.1"/>
</dbReference>
<dbReference type="SMR" id="Q4V793"/>
<dbReference type="FunCoup" id="Q4V793">
    <property type="interactions" value="159"/>
</dbReference>
<dbReference type="STRING" id="10116.ENSRNOP00000028266"/>
<dbReference type="iPTMnet" id="Q4V793"/>
<dbReference type="PhosphoSitePlus" id="Q4V793"/>
<dbReference type="PaxDb" id="10116-ENSRNOP00000028266"/>
<dbReference type="Ensembl" id="ENSRNOT00000028266.6">
    <property type="protein sequence ID" value="ENSRNOP00000028266.3"/>
    <property type="gene ID" value="ENSRNOG00000020835.6"/>
</dbReference>
<dbReference type="GeneID" id="308449"/>
<dbReference type="KEGG" id="rno:308449"/>
<dbReference type="UCSC" id="RGD:1307541">
    <property type="organism name" value="rat"/>
</dbReference>
<dbReference type="AGR" id="RGD:1307541"/>
<dbReference type="CTD" id="147746"/>
<dbReference type="RGD" id="1307541">
    <property type="gene designation" value="Hipk4"/>
</dbReference>
<dbReference type="eggNOG" id="KOG0667">
    <property type="taxonomic scope" value="Eukaryota"/>
</dbReference>
<dbReference type="GeneTree" id="ENSGT00940000161512"/>
<dbReference type="HOGENOM" id="CLU_000288_5_14_1"/>
<dbReference type="InParanoid" id="Q4V793"/>
<dbReference type="OMA" id="DMTMDAE"/>
<dbReference type="OrthoDB" id="437530at2759"/>
<dbReference type="PhylomeDB" id="Q4V793"/>
<dbReference type="TreeFam" id="TF105417"/>
<dbReference type="PRO" id="PR:Q4V793"/>
<dbReference type="Proteomes" id="UP000002494">
    <property type="component" value="Chromosome 1"/>
</dbReference>
<dbReference type="Bgee" id="ENSRNOG00000020835">
    <property type="expression patterns" value="Expressed in testis and 17 other cell types or tissues"/>
</dbReference>
<dbReference type="GO" id="GO:0005737">
    <property type="term" value="C:cytoplasm"/>
    <property type="evidence" value="ECO:0000266"/>
    <property type="project" value="RGD"/>
</dbReference>
<dbReference type="GO" id="GO:0005634">
    <property type="term" value="C:nucleus"/>
    <property type="evidence" value="ECO:0000266"/>
    <property type="project" value="RGD"/>
</dbReference>
<dbReference type="GO" id="GO:0005524">
    <property type="term" value="F:ATP binding"/>
    <property type="evidence" value="ECO:0007669"/>
    <property type="project" value="UniProtKB-KW"/>
</dbReference>
<dbReference type="GO" id="GO:0035173">
    <property type="term" value="F:histone kinase activity"/>
    <property type="evidence" value="ECO:0000266"/>
    <property type="project" value="RGD"/>
</dbReference>
<dbReference type="GO" id="GO:0004672">
    <property type="term" value="F:protein kinase activity"/>
    <property type="evidence" value="ECO:0000266"/>
    <property type="project" value="RGD"/>
</dbReference>
<dbReference type="GO" id="GO:0106310">
    <property type="term" value="F:protein serine kinase activity"/>
    <property type="evidence" value="ECO:0007669"/>
    <property type="project" value="RHEA"/>
</dbReference>
<dbReference type="GO" id="GO:0004674">
    <property type="term" value="F:protein serine/threonine kinase activity"/>
    <property type="evidence" value="ECO:0000318"/>
    <property type="project" value="GO_Central"/>
</dbReference>
<dbReference type="GO" id="GO:0004713">
    <property type="term" value="F:protein tyrosine kinase activity"/>
    <property type="evidence" value="ECO:0000318"/>
    <property type="project" value="GO_Central"/>
</dbReference>
<dbReference type="GO" id="GO:1901796">
    <property type="term" value="P:regulation of signal transduction by p53 class mediator"/>
    <property type="evidence" value="ECO:0000266"/>
    <property type="project" value="RGD"/>
</dbReference>
<dbReference type="FunFam" id="1.10.510.10:FF:000029">
    <property type="entry name" value="Homeodomain-interacting protein kinase 2 isoform 1"/>
    <property type="match status" value="1"/>
</dbReference>
<dbReference type="Gene3D" id="3.30.200.20">
    <property type="entry name" value="Phosphorylase Kinase, domain 1"/>
    <property type="match status" value="1"/>
</dbReference>
<dbReference type="Gene3D" id="1.10.510.10">
    <property type="entry name" value="Transferase(Phosphotransferase) domain 1"/>
    <property type="match status" value="1"/>
</dbReference>
<dbReference type="InterPro" id="IPR011009">
    <property type="entry name" value="Kinase-like_dom_sf"/>
</dbReference>
<dbReference type="InterPro" id="IPR000719">
    <property type="entry name" value="Prot_kinase_dom"/>
</dbReference>
<dbReference type="InterPro" id="IPR017441">
    <property type="entry name" value="Protein_kinase_ATP_BS"/>
</dbReference>
<dbReference type="InterPro" id="IPR008271">
    <property type="entry name" value="Ser/Thr_kinase_AS"/>
</dbReference>
<dbReference type="InterPro" id="IPR050494">
    <property type="entry name" value="Ser_Thr_dual-spec_kinase"/>
</dbReference>
<dbReference type="PANTHER" id="PTHR24058">
    <property type="entry name" value="DUAL SPECIFICITY PROTEIN KINASE"/>
    <property type="match status" value="1"/>
</dbReference>
<dbReference type="PANTHER" id="PTHR24058:SF46">
    <property type="entry name" value="HOMEODOMAIN-INTERACTING PROTEIN KINASE 4"/>
    <property type="match status" value="1"/>
</dbReference>
<dbReference type="Pfam" id="PF00069">
    <property type="entry name" value="Pkinase"/>
    <property type="match status" value="1"/>
</dbReference>
<dbReference type="SMART" id="SM00220">
    <property type="entry name" value="S_TKc"/>
    <property type="match status" value="1"/>
</dbReference>
<dbReference type="SUPFAM" id="SSF56112">
    <property type="entry name" value="Protein kinase-like (PK-like)"/>
    <property type="match status" value="1"/>
</dbReference>
<dbReference type="PROSITE" id="PS00107">
    <property type="entry name" value="PROTEIN_KINASE_ATP"/>
    <property type="match status" value="1"/>
</dbReference>
<dbReference type="PROSITE" id="PS50011">
    <property type="entry name" value="PROTEIN_KINASE_DOM"/>
    <property type="match status" value="1"/>
</dbReference>
<dbReference type="PROSITE" id="PS00108">
    <property type="entry name" value="PROTEIN_KINASE_ST"/>
    <property type="match status" value="1"/>
</dbReference>
<organism>
    <name type="scientific">Rattus norvegicus</name>
    <name type="common">Rat</name>
    <dbReference type="NCBI Taxonomy" id="10116"/>
    <lineage>
        <taxon>Eukaryota</taxon>
        <taxon>Metazoa</taxon>
        <taxon>Chordata</taxon>
        <taxon>Craniata</taxon>
        <taxon>Vertebrata</taxon>
        <taxon>Euteleostomi</taxon>
        <taxon>Mammalia</taxon>
        <taxon>Eutheria</taxon>
        <taxon>Euarchontoglires</taxon>
        <taxon>Glires</taxon>
        <taxon>Rodentia</taxon>
        <taxon>Myomorpha</taxon>
        <taxon>Muroidea</taxon>
        <taxon>Muridae</taxon>
        <taxon>Murinae</taxon>
        <taxon>Rattus</taxon>
    </lineage>
</organism>
<gene>
    <name type="primary">Hipk4</name>
</gene>
<reference key="1">
    <citation type="journal article" date="2004" name="Genome Res.">
        <title>The status, quality, and expansion of the NIH full-length cDNA project: the Mammalian Gene Collection (MGC).</title>
        <authorList>
            <consortium name="The MGC Project Team"/>
        </authorList>
    </citation>
    <scope>NUCLEOTIDE SEQUENCE [LARGE SCALE MRNA]</scope>
    <source>
        <tissue>Testis</tissue>
    </source>
</reference>